<comment type="function">
    <text evidence="1">Involved in peptide bond synthesis. Alleviates ribosome stalling that occurs when 3 or more consecutive Pro residues or the sequence PPG is present in a protein, possibly by augmenting the peptidyl transferase activity of the ribosome. Modification of Lys-34 is required for alleviation.</text>
</comment>
<comment type="pathway">
    <text evidence="1">Protein biosynthesis; polypeptide chain elongation.</text>
</comment>
<comment type="subcellular location">
    <subcellularLocation>
        <location evidence="1">Cytoplasm</location>
    </subcellularLocation>
</comment>
<comment type="PTM">
    <text evidence="1">May be beta-lysylated on the epsilon-amino group of Lys-34 by the combined action of EpmA and EpmB, and then hydroxylated on the C5 position of the same residue by EpmC (if this protein is present). Lysylation is critical for the stimulatory effect of EF-P on peptide-bond formation. The lysylation moiety may extend toward the peptidyltransferase center and stabilize the terminal 3-CCA end of the tRNA. Hydroxylation of the C5 position on Lys-34 may allow additional potential stabilizing hydrogen-bond interactions with the P-tRNA.</text>
</comment>
<comment type="similarity">
    <text evidence="1">Belongs to the elongation factor P family.</text>
</comment>
<dbReference type="EMBL" id="CP001614">
    <property type="protein sequence ID" value="ACR12766.1"/>
    <property type="molecule type" value="Genomic_DNA"/>
</dbReference>
<dbReference type="RefSeq" id="WP_015818878.1">
    <property type="nucleotide sequence ID" value="NC_012997.1"/>
</dbReference>
<dbReference type="SMR" id="C5BNT8"/>
<dbReference type="STRING" id="377629.TERTU_0667"/>
<dbReference type="GeneID" id="58408479"/>
<dbReference type="GeneID" id="93857952"/>
<dbReference type="KEGG" id="ttu:TERTU_0667"/>
<dbReference type="eggNOG" id="COG0231">
    <property type="taxonomic scope" value="Bacteria"/>
</dbReference>
<dbReference type="HOGENOM" id="CLU_074944_0_0_6"/>
<dbReference type="OrthoDB" id="9801844at2"/>
<dbReference type="UniPathway" id="UPA00345"/>
<dbReference type="Proteomes" id="UP000009080">
    <property type="component" value="Chromosome"/>
</dbReference>
<dbReference type="GO" id="GO:0005737">
    <property type="term" value="C:cytoplasm"/>
    <property type="evidence" value="ECO:0007669"/>
    <property type="project" value="UniProtKB-SubCell"/>
</dbReference>
<dbReference type="GO" id="GO:0003746">
    <property type="term" value="F:translation elongation factor activity"/>
    <property type="evidence" value="ECO:0007669"/>
    <property type="project" value="UniProtKB-UniRule"/>
</dbReference>
<dbReference type="GO" id="GO:0043043">
    <property type="term" value="P:peptide biosynthetic process"/>
    <property type="evidence" value="ECO:0007669"/>
    <property type="project" value="InterPro"/>
</dbReference>
<dbReference type="CDD" id="cd04470">
    <property type="entry name" value="S1_EF-P_repeat_1"/>
    <property type="match status" value="1"/>
</dbReference>
<dbReference type="CDD" id="cd05794">
    <property type="entry name" value="S1_EF-P_repeat_2"/>
    <property type="match status" value="1"/>
</dbReference>
<dbReference type="FunFam" id="2.30.30.30:FF:000003">
    <property type="entry name" value="Elongation factor P"/>
    <property type="match status" value="1"/>
</dbReference>
<dbReference type="FunFam" id="2.40.50.140:FF:000004">
    <property type="entry name" value="Elongation factor P"/>
    <property type="match status" value="1"/>
</dbReference>
<dbReference type="FunFam" id="2.40.50.140:FF:000009">
    <property type="entry name" value="Elongation factor P"/>
    <property type="match status" value="1"/>
</dbReference>
<dbReference type="Gene3D" id="2.30.30.30">
    <property type="match status" value="1"/>
</dbReference>
<dbReference type="Gene3D" id="2.40.50.140">
    <property type="entry name" value="Nucleic acid-binding proteins"/>
    <property type="match status" value="2"/>
</dbReference>
<dbReference type="HAMAP" id="MF_00141">
    <property type="entry name" value="EF_P"/>
    <property type="match status" value="1"/>
</dbReference>
<dbReference type="InterPro" id="IPR015365">
    <property type="entry name" value="Elong-fact-P_C"/>
</dbReference>
<dbReference type="InterPro" id="IPR012340">
    <property type="entry name" value="NA-bd_OB-fold"/>
</dbReference>
<dbReference type="InterPro" id="IPR014722">
    <property type="entry name" value="Rib_uL2_dom2"/>
</dbReference>
<dbReference type="InterPro" id="IPR020599">
    <property type="entry name" value="Transl_elong_fac_P/YeiP"/>
</dbReference>
<dbReference type="InterPro" id="IPR013185">
    <property type="entry name" value="Transl_elong_KOW-like"/>
</dbReference>
<dbReference type="InterPro" id="IPR001059">
    <property type="entry name" value="Transl_elong_P/YeiP_cen"/>
</dbReference>
<dbReference type="InterPro" id="IPR013852">
    <property type="entry name" value="Transl_elong_P/YeiP_CS"/>
</dbReference>
<dbReference type="InterPro" id="IPR011768">
    <property type="entry name" value="Transl_elongation_fac_P"/>
</dbReference>
<dbReference type="InterPro" id="IPR008991">
    <property type="entry name" value="Translation_prot_SH3-like_sf"/>
</dbReference>
<dbReference type="NCBIfam" id="TIGR00038">
    <property type="entry name" value="efp"/>
    <property type="match status" value="1"/>
</dbReference>
<dbReference type="NCBIfam" id="NF001810">
    <property type="entry name" value="PRK00529.1"/>
    <property type="match status" value="1"/>
</dbReference>
<dbReference type="PANTHER" id="PTHR30053">
    <property type="entry name" value="ELONGATION FACTOR P"/>
    <property type="match status" value="1"/>
</dbReference>
<dbReference type="PANTHER" id="PTHR30053:SF12">
    <property type="entry name" value="ELONGATION FACTOR P (EF-P) FAMILY PROTEIN"/>
    <property type="match status" value="1"/>
</dbReference>
<dbReference type="Pfam" id="PF01132">
    <property type="entry name" value="EFP"/>
    <property type="match status" value="1"/>
</dbReference>
<dbReference type="Pfam" id="PF08207">
    <property type="entry name" value="EFP_N"/>
    <property type="match status" value="1"/>
</dbReference>
<dbReference type="Pfam" id="PF09285">
    <property type="entry name" value="Elong-fact-P_C"/>
    <property type="match status" value="1"/>
</dbReference>
<dbReference type="PIRSF" id="PIRSF005901">
    <property type="entry name" value="EF-P"/>
    <property type="match status" value="1"/>
</dbReference>
<dbReference type="SMART" id="SM01185">
    <property type="entry name" value="EFP"/>
    <property type="match status" value="1"/>
</dbReference>
<dbReference type="SMART" id="SM00841">
    <property type="entry name" value="Elong-fact-P_C"/>
    <property type="match status" value="1"/>
</dbReference>
<dbReference type="SUPFAM" id="SSF50249">
    <property type="entry name" value="Nucleic acid-binding proteins"/>
    <property type="match status" value="2"/>
</dbReference>
<dbReference type="SUPFAM" id="SSF50104">
    <property type="entry name" value="Translation proteins SH3-like domain"/>
    <property type="match status" value="1"/>
</dbReference>
<dbReference type="PROSITE" id="PS01275">
    <property type="entry name" value="EFP"/>
    <property type="match status" value="1"/>
</dbReference>
<keyword id="KW-0963">Cytoplasm</keyword>
<keyword id="KW-0251">Elongation factor</keyword>
<keyword id="KW-0379">Hydroxylation</keyword>
<keyword id="KW-0648">Protein biosynthesis</keyword>
<keyword id="KW-1185">Reference proteome</keyword>
<protein>
    <recommendedName>
        <fullName evidence="1">Elongation factor P</fullName>
        <shortName evidence="1">EF-P</shortName>
    </recommendedName>
</protein>
<accession>C5BNT8</accession>
<proteinExistence type="inferred from homology"/>
<evidence type="ECO:0000255" key="1">
    <source>
        <dbReference type="HAMAP-Rule" id="MF_00141"/>
    </source>
</evidence>
<feature type="chain" id="PRO_1000203281" description="Elongation factor P">
    <location>
        <begin position="1"/>
        <end position="189"/>
    </location>
</feature>
<feature type="modified residue" description="N6-(3,6-diaminohexanoyl)-5-hydroxylysine" evidence="1">
    <location>
        <position position="34"/>
    </location>
</feature>
<organism>
    <name type="scientific">Teredinibacter turnerae (strain ATCC 39867 / T7901)</name>
    <dbReference type="NCBI Taxonomy" id="377629"/>
    <lineage>
        <taxon>Bacteria</taxon>
        <taxon>Pseudomonadati</taxon>
        <taxon>Pseudomonadota</taxon>
        <taxon>Gammaproteobacteria</taxon>
        <taxon>Cellvibrionales</taxon>
        <taxon>Cellvibrionaceae</taxon>
        <taxon>Teredinibacter</taxon>
    </lineage>
</organism>
<sequence length="189" mass="20776">MATYSTNEFKSGLKVMLDGDPCSIVENEFVKPGKGQAFNRVKMKNLKSGRVWERTFKSGESLEGADVVDRDMQYLYNDGEFWHFMEPESFEQFQGDASVVGDSAKWLNEQDTVVVTLYNGSPLAVTPPNHVELEIVETDPGLKGDTAQGGTKPATLSTGAVVKVPLFLSTGETVRVDTRTGEYLGRANK</sequence>
<reference key="1">
    <citation type="journal article" date="2009" name="PLoS ONE">
        <title>The complete genome of Teredinibacter turnerae T7901: an intracellular endosymbiont of marine wood-boring bivalves (shipworms).</title>
        <authorList>
            <person name="Yang J.C."/>
            <person name="Madupu R."/>
            <person name="Durkin A.S."/>
            <person name="Ekborg N.A."/>
            <person name="Pedamallu C.S."/>
            <person name="Hostetler J.B."/>
            <person name="Radune D."/>
            <person name="Toms B.S."/>
            <person name="Henrissat B."/>
            <person name="Coutinho P.M."/>
            <person name="Schwarz S."/>
            <person name="Field L."/>
            <person name="Trindade-Silva A.E."/>
            <person name="Soares C.A.G."/>
            <person name="Elshahawi S."/>
            <person name="Hanora A."/>
            <person name="Schmidt E.W."/>
            <person name="Haygood M.G."/>
            <person name="Posfai J."/>
            <person name="Benner J."/>
            <person name="Madinger C."/>
            <person name="Nove J."/>
            <person name="Anton B."/>
            <person name="Chaudhary K."/>
            <person name="Foster J."/>
            <person name="Holman A."/>
            <person name="Kumar S."/>
            <person name="Lessard P.A."/>
            <person name="Luyten Y.A."/>
            <person name="Slatko B."/>
            <person name="Wood N."/>
            <person name="Wu B."/>
            <person name="Teplitski M."/>
            <person name="Mougous J.D."/>
            <person name="Ward N."/>
            <person name="Eisen J.A."/>
            <person name="Badger J.H."/>
            <person name="Distel D.L."/>
        </authorList>
    </citation>
    <scope>NUCLEOTIDE SEQUENCE [LARGE SCALE GENOMIC DNA]</scope>
    <source>
        <strain>ATCC 39867 / T7901</strain>
    </source>
</reference>
<name>EFP_TERTT</name>
<gene>
    <name evidence="1" type="primary">efp</name>
    <name type="ordered locus">TERTU_0667</name>
</gene>